<comment type="function">
    <text evidence="1">Involved in peptide bond synthesis. Stimulates efficient translation and peptide-bond synthesis on native or reconstituted 70S ribosomes in vitro. Probably functions indirectly by altering the affinity of the ribosome for aminoacyl-tRNA, thus increasing their reactivity as acceptors for peptidyl transferase.</text>
</comment>
<comment type="pathway">
    <text evidence="1">Protein biosynthesis; polypeptide chain elongation.</text>
</comment>
<comment type="subcellular location">
    <subcellularLocation>
        <location evidence="1">Cytoplasm</location>
    </subcellularLocation>
</comment>
<comment type="similarity">
    <text evidence="1">Belongs to the elongation factor P family.</text>
</comment>
<accession>B6JPS3</accession>
<sequence length="187" mass="20774">MAIGMSELKKGLKIELGGVPYRIVEYQHVKPGKGAAFVRAKIKSFLDGKVIEKTFHAGDKCEEPNLVEKTMQYLYHDGDTYQFMDIESYEQIALNDSQVGEASKWMLDGMQVQVLLHNDKAISVDVPQVVALKIVETAPNFKGDTSSASKKPATLETGAVVQVPFHVLEGEVIKVNTETEEYLEKVK</sequence>
<evidence type="ECO:0000255" key="1">
    <source>
        <dbReference type="HAMAP-Rule" id="MF_00141"/>
    </source>
</evidence>
<keyword id="KW-0963">Cytoplasm</keyword>
<keyword id="KW-0251">Elongation factor</keyword>
<keyword id="KW-0648">Protein biosynthesis</keyword>
<proteinExistence type="inferred from homology"/>
<dbReference type="EMBL" id="CP001217">
    <property type="protein sequence ID" value="ACJ07334.1"/>
    <property type="molecule type" value="Genomic_DNA"/>
</dbReference>
<dbReference type="SMR" id="B6JPS3"/>
<dbReference type="KEGG" id="hpp:HPP12_0174"/>
<dbReference type="HOGENOM" id="CLU_074944_0_1_7"/>
<dbReference type="UniPathway" id="UPA00345"/>
<dbReference type="Proteomes" id="UP000008198">
    <property type="component" value="Chromosome"/>
</dbReference>
<dbReference type="GO" id="GO:0005737">
    <property type="term" value="C:cytoplasm"/>
    <property type="evidence" value="ECO:0007669"/>
    <property type="project" value="UniProtKB-SubCell"/>
</dbReference>
<dbReference type="GO" id="GO:0003746">
    <property type="term" value="F:translation elongation factor activity"/>
    <property type="evidence" value="ECO:0007669"/>
    <property type="project" value="UniProtKB-UniRule"/>
</dbReference>
<dbReference type="GO" id="GO:0043043">
    <property type="term" value="P:peptide biosynthetic process"/>
    <property type="evidence" value="ECO:0007669"/>
    <property type="project" value="InterPro"/>
</dbReference>
<dbReference type="CDD" id="cd04470">
    <property type="entry name" value="S1_EF-P_repeat_1"/>
    <property type="match status" value="1"/>
</dbReference>
<dbReference type="CDD" id="cd05794">
    <property type="entry name" value="S1_EF-P_repeat_2"/>
    <property type="match status" value="1"/>
</dbReference>
<dbReference type="FunFam" id="2.30.30.30:FF:000003">
    <property type="entry name" value="Elongation factor P"/>
    <property type="match status" value="1"/>
</dbReference>
<dbReference type="FunFam" id="2.40.50.140:FF:000004">
    <property type="entry name" value="Elongation factor P"/>
    <property type="match status" value="1"/>
</dbReference>
<dbReference type="FunFam" id="2.40.50.140:FF:000009">
    <property type="entry name" value="Elongation factor P"/>
    <property type="match status" value="1"/>
</dbReference>
<dbReference type="Gene3D" id="2.30.30.30">
    <property type="match status" value="1"/>
</dbReference>
<dbReference type="Gene3D" id="2.40.50.140">
    <property type="entry name" value="Nucleic acid-binding proteins"/>
    <property type="match status" value="2"/>
</dbReference>
<dbReference type="HAMAP" id="MF_00141">
    <property type="entry name" value="EF_P"/>
    <property type="match status" value="1"/>
</dbReference>
<dbReference type="InterPro" id="IPR015365">
    <property type="entry name" value="Elong-fact-P_C"/>
</dbReference>
<dbReference type="InterPro" id="IPR012340">
    <property type="entry name" value="NA-bd_OB-fold"/>
</dbReference>
<dbReference type="InterPro" id="IPR014722">
    <property type="entry name" value="Rib_uL2_dom2"/>
</dbReference>
<dbReference type="InterPro" id="IPR020599">
    <property type="entry name" value="Transl_elong_fac_P/YeiP"/>
</dbReference>
<dbReference type="InterPro" id="IPR013185">
    <property type="entry name" value="Transl_elong_KOW-like"/>
</dbReference>
<dbReference type="InterPro" id="IPR001059">
    <property type="entry name" value="Transl_elong_P/YeiP_cen"/>
</dbReference>
<dbReference type="InterPro" id="IPR013852">
    <property type="entry name" value="Transl_elong_P/YeiP_CS"/>
</dbReference>
<dbReference type="InterPro" id="IPR011768">
    <property type="entry name" value="Transl_elongation_fac_P"/>
</dbReference>
<dbReference type="InterPro" id="IPR008991">
    <property type="entry name" value="Translation_prot_SH3-like_sf"/>
</dbReference>
<dbReference type="NCBIfam" id="TIGR00038">
    <property type="entry name" value="efp"/>
    <property type="match status" value="1"/>
</dbReference>
<dbReference type="NCBIfam" id="NF001810">
    <property type="entry name" value="PRK00529.1"/>
    <property type="match status" value="1"/>
</dbReference>
<dbReference type="PANTHER" id="PTHR30053">
    <property type="entry name" value="ELONGATION FACTOR P"/>
    <property type="match status" value="1"/>
</dbReference>
<dbReference type="PANTHER" id="PTHR30053:SF12">
    <property type="entry name" value="ELONGATION FACTOR P (EF-P) FAMILY PROTEIN"/>
    <property type="match status" value="1"/>
</dbReference>
<dbReference type="Pfam" id="PF01132">
    <property type="entry name" value="EFP"/>
    <property type="match status" value="1"/>
</dbReference>
<dbReference type="Pfam" id="PF08207">
    <property type="entry name" value="EFP_N"/>
    <property type="match status" value="1"/>
</dbReference>
<dbReference type="Pfam" id="PF09285">
    <property type="entry name" value="Elong-fact-P_C"/>
    <property type="match status" value="1"/>
</dbReference>
<dbReference type="PIRSF" id="PIRSF005901">
    <property type="entry name" value="EF-P"/>
    <property type="match status" value="1"/>
</dbReference>
<dbReference type="SMART" id="SM01185">
    <property type="entry name" value="EFP"/>
    <property type="match status" value="1"/>
</dbReference>
<dbReference type="SMART" id="SM00841">
    <property type="entry name" value="Elong-fact-P_C"/>
    <property type="match status" value="1"/>
</dbReference>
<dbReference type="SUPFAM" id="SSF50249">
    <property type="entry name" value="Nucleic acid-binding proteins"/>
    <property type="match status" value="2"/>
</dbReference>
<dbReference type="SUPFAM" id="SSF50104">
    <property type="entry name" value="Translation proteins SH3-like domain"/>
    <property type="match status" value="1"/>
</dbReference>
<dbReference type="PROSITE" id="PS01275">
    <property type="entry name" value="EFP"/>
    <property type="match status" value="1"/>
</dbReference>
<name>EFP_HELP2</name>
<reference key="1">
    <citation type="submission" date="2008-10" db="EMBL/GenBank/DDBJ databases">
        <title>The complete genome sequence of Helicobacter pylori strain P12.</title>
        <authorList>
            <person name="Fischer W."/>
            <person name="Windhager L."/>
            <person name="Karnholz A."/>
            <person name="Zeiller M."/>
            <person name="Zimmer R."/>
            <person name="Haas R."/>
        </authorList>
    </citation>
    <scope>NUCLEOTIDE SEQUENCE [LARGE SCALE GENOMIC DNA]</scope>
    <source>
        <strain>P12</strain>
    </source>
</reference>
<gene>
    <name evidence="1" type="primary">efp</name>
    <name type="ordered locus">HPP12_0174</name>
</gene>
<feature type="chain" id="PRO_1000096160" description="Elongation factor P">
    <location>
        <begin position="1"/>
        <end position="187"/>
    </location>
</feature>
<protein>
    <recommendedName>
        <fullName evidence="1">Elongation factor P</fullName>
        <shortName evidence="1">EF-P</shortName>
    </recommendedName>
</protein>
<organism>
    <name type="scientific">Helicobacter pylori (strain P12)</name>
    <dbReference type="NCBI Taxonomy" id="570508"/>
    <lineage>
        <taxon>Bacteria</taxon>
        <taxon>Pseudomonadati</taxon>
        <taxon>Campylobacterota</taxon>
        <taxon>Epsilonproteobacteria</taxon>
        <taxon>Campylobacterales</taxon>
        <taxon>Helicobacteraceae</taxon>
        <taxon>Helicobacter</taxon>
    </lineage>
</organism>